<gene>
    <name type="primary">tdcB</name>
    <name type="ordered locus">SAOUHSC_01451</name>
</gene>
<sequence>MTTNTVTLQTAHIVSLGDIEEAKASIKPFIRRTPLIKSMYLSQSITKGNVFLKLENMQFTGSFKFRGASNKINHLTDEQKEKGIIAASAGNHAQGVALTAKLLGIDATIVMPETAPQAKQQATKGYGAKVILKGKNFNETRLYMEELAKENGMTIVHPYDDKFVMAGQGTIGLEILDDIWNVNTVIVPVGGGGLIAGIATALKSFNPSIHIIGVQSENVHGMAESFYKRDLTEHRVDSTIADGCDVKVPGEQTYEVVKHLVDEFILVTEEEIEHAMKDLMQRAKIITEGAGALPTAAILSGKINNKWLEDKNVVALVSGGNVDLTRVSGVIEHGLNIADTSKGVVG</sequence>
<protein>
    <recommendedName>
        <fullName>L-threonine dehydratase catabolic TdcB</fullName>
        <ecNumber>4.3.1.19</ecNumber>
    </recommendedName>
    <alternativeName>
        <fullName>Threonine deaminase</fullName>
    </alternativeName>
</protein>
<dbReference type="EC" id="4.3.1.19"/>
<dbReference type="EMBL" id="CP000253">
    <property type="protein sequence ID" value="ABD30539.1"/>
    <property type="molecule type" value="Genomic_DNA"/>
</dbReference>
<dbReference type="RefSeq" id="WP_000210828.1">
    <property type="nucleotide sequence ID" value="NZ_LS483365.1"/>
</dbReference>
<dbReference type="RefSeq" id="YP_499972.1">
    <property type="nucleotide sequence ID" value="NC_007795.1"/>
</dbReference>
<dbReference type="SMR" id="Q2FYJ3"/>
<dbReference type="STRING" id="93061.SAOUHSC_01451"/>
<dbReference type="PaxDb" id="1280-SAXN108_1459"/>
<dbReference type="GeneID" id="3920228"/>
<dbReference type="KEGG" id="sao:SAOUHSC_01451"/>
<dbReference type="PATRIC" id="fig|93061.5.peg.1323"/>
<dbReference type="eggNOG" id="COG1171">
    <property type="taxonomic scope" value="Bacteria"/>
</dbReference>
<dbReference type="HOGENOM" id="CLU_021152_4_2_9"/>
<dbReference type="OrthoDB" id="9811476at2"/>
<dbReference type="UniPathway" id="UPA00052">
    <property type="reaction ID" value="UER00507"/>
</dbReference>
<dbReference type="PRO" id="PR:Q2FYJ3"/>
<dbReference type="Proteomes" id="UP000008816">
    <property type="component" value="Chromosome"/>
</dbReference>
<dbReference type="GO" id="GO:0003941">
    <property type="term" value="F:L-serine ammonia-lyase activity"/>
    <property type="evidence" value="ECO:0000318"/>
    <property type="project" value="GO_Central"/>
</dbReference>
<dbReference type="GO" id="GO:0000166">
    <property type="term" value="F:nucleotide binding"/>
    <property type="evidence" value="ECO:0007669"/>
    <property type="project" value="UniProtKB-KW"/>
</dbReference>
<dbReference type="GO" id="GO:0030170">
    <property type="term" value="F:pyridoxal phosphate binding"/>
    <property type="evidence" value="ECO:0007669"/>
    <property type="project" value="InterPro"/>
</dbReference>
<dbReference type="GO" id="GO:0004794">
    <property type="term" value="F:threonine deaminase activity"/>
    <property type="evidence" value="ECO:0007669"/>
    <property type="project" value="UniProtKB-EC"/>
</dbReference>
<dbReference type="GO" id="GO:0006565">
    <property type="term" value="P:L-serine catabolic process"/>
    <property type="evidence" value="ECO:0000318"/>
    <property type="project" value="GO_Central"/>
</dbReference>
<dbReference type="GO" id="GO:0070689">
    <property type="term" value="P:L-threonine catabolic process to propionate"/>
    <property type="evidence" value="ECO:0007669"/>
    <property type="project" value="UniProtKB-UniPathway"/>
</dbReference>
<dbReference type="CDD" id="cd01562">
    <property type="entry name" value="Thr-dehyd"/>
    <property type="match status" value="1"/>
</dbReference>
<dbReference type="FunFam" id="3.40.50.1100:FF:000007">
    <property type="entry name" value="L-threonine dehydratase catabolic TdcB"/>
    <property type="match status" value="1"/>
</dbReference>
<dbReference type="Gene3D" id="3.40.50.1100">
    <property type="match status" value="2"/>
</dbReference>
<dbReference type="InterPro" id="IPR050147">
    <property type="entry name" value="Ser/Thr_Dehydratase"/>
</dbReference>
<dbReference type="InterPro" id="IPR000634">
    <property type="entry name" value="Ser/Thr_deHydtase_PyrdxlP-BS"/>
</dbReference>
<dbReference type="InterPro" id="IPR005789">
    <property type="entry name" value="Thr_deHydtase_catblc"/>
</dbReference>
<dbReference type="InterPro" id="IPR001926">
    <property type="entry name" value="TrpB-like_PALP"/>
</dbReference>
<dbReference type="InterPro" id="IPR036052">
    <property type="entry name" value="TrpB-like_PALP_sf"/>
</dbReference>
<dbReference type="NCBIfam" id="TIGR01127">
    <property type="entry name" value="ilvA_1Cterm"/>
    <property type="match status" value="1"/>
</dbReference>
<dbReference type="NCBIfam" id="NF006389">
    <property type="entry name" value="PRK08638.1"/>
    <property type="match status" value="1"/>
</dbReference>
<dbReference type="PANTHER" id="PTHR48078:SF6">
    <property type="entry name" value="L-THREONINE DEHYDRATASE CATABOLIC TDCB"/>
    <property type="match status" value="1"/>
</dbReference>
<dbReference type="PANTHER" id="PTHR48078">
    <property type="entry name" value="THREONINE DEHYDRATASE, MITOCHONDRIAL-RELATED"/>
    <property type="match status" value="1"/>
</dbReference>
<dbReference type="Pfam" id="PF00291">
    <property type="entry name" value="PALP"/>
    <property type="match status" value="1"/>
</dbReference>
<dbReference type="SUPFAM" id="SSF53686">
    <property type="entry name" value="Tryptophan synthase beta subunit-like PLP-dependent enzymes"/>
    <property type="match status" value="1"/>
</dbReference>
<dbReference type="PROSITE" id="PS00165">
    <property type="entry name" value="DEHYDRATASE_SER_THR"/>
    <property type="match status" value="1"/>
</dbReference>
<reference key="1">
    <citation type="book" date="2006" name="Gram positive pathogens, 2nd edition">
        <title>The Staphylococcus aureus NCTC 8325 genome.</title>
        <editorList>
            <person name="Fischetti V."/>
            <person name="Novick R."/>
            <person name="Ferretti J."/>
            <person name="Portnoy D."/>
            <person name="Rood J."/>
        </editorList>
        <authorList>
            <person name="Gillaspy A.F."/>
            <person name="Worrell V."/>
            <person name="Orvis J."/>
            <person name="Roe B.A."/>
            <person name="Dyer D.W."/>
            <person name="Iandolo J.J."/>
        </authorList>
    </citation>
    <scope>NUCLEOTIDE SEQUENCE [LARGE SCALE GENOMIC DNA]</scope>
    <source>
        <strain>NCTC 8325 / PS 47</strain>
    </source>
</reference>
<proteinExistence type="inferred from homology"/>
<name>TDCB_STAA8</name>
<feature type="chain" id="PRO_0000287333" description="L-threonine dehydratase catabolic TdcB">
    <location>
        <begin position="1"/>
        <end position="346"/>
    </location>
</feature>
<feature type="binding site" evidence="1">
    <location>
        <begin position="59"/>
        <end position="60"/>
    </location>
    <ligand>
        <name>AMP</name>
        <dbReference type="ChEBI" id="CHEBI:456215"/>
    </ligand>
</feature>
<feature type="binding site" evidence="1">
    <location>
        <position position="94"/>
    </location>
    <ligand>
        <name>AMP</name>
        <dbReference type="ChEBI" id="CHEBI:456215"/>
    </ligand>
</feature>
<feature type="binding site" evidence="1">
    <location>
        <begin position="125"/>
        <end position="126"/>
    </location>
    <ligand>
        <name>AMP</name>
        <dbReference type="ChEBI" id="CHEBI:456215"/>
    </ligand>
</feature>
<feature type="binding site" evidence="1">
    <location>
        <position position="321"/>
    </location>
    <ligand>
        <name>AMP</name>
        <dbReference type="ChEBI" id="CHEBI:456215"/>
    </ligand>
</feature>
<feature type="modified residue" description="N6-(pyridoxal phosphate)lysine" evidence="1">
    <location>
        <position position="64"/>
    </location>
</feature>
<keyword id="KW-0021">Allosteric enzyme</keyword>
<keyword id="KW-0456">Lyase</keyword>
<keyword id="KW-0547">Nucleotide-binding</keyword>
<keyword id="KW-0663">Pyridoxal phosphate</keyword>
<keyword id="KW-1185">Reference proteome</keyword>
<evidence type="ECO:0000250" key="1"/>
<evidence type="ECO:0000305" key="2"/>
<comment type="function">
    <text evidence="1">Catalyzes the anaerobic formation of alpha-ketobutyrate and ammonia from threonine in a two-step reaction. The first step involved a dehydration of threonine and a production of enamine intermediates (aminocrotonate), which tautomerizes to its imine form (iminobutyrate). Both intermediates are unstable and short-lived. The second step is the nonenzymatic hydrolysis of the enamine/imine intermediates to form 2-ketobutyrate and free ammonia. In the low water environment of the cell, the second step is accelerated by RidA (By similarity).</text>
</comment>
<comment type="catalytic activity">
    <reaction>
        <text>L-threonine = 2-oxobutanoate + NH4(+)</text>
        <dbReference type="Rhea" id="RHEA:22108"/>
        <dbReference type="ChEBI" id="CHEBI:16763"/>
        <dbReference type="ChEBI" id="CHEBI:28938"/>
        <dbReference type="ChEBI" id="CHEBI:57926"/>
        <dbReference type="EC" id="4.3.1.19"/>
    </reaction>
</comment>
<comment type="cofactor">
    <cofactor evidence="1">
        <name>pyridoxal 5'-phosphate</name>
        <dbReference type="ChEBI" id="CHEBI:597326"/>
    </cofactor>
</comment>
<comment type="activity regulation">
    <text evidence="1">Each protein molecule can bind up to four molecules of AMP, which act as an allosteric activator to the enzyme.</text>
</comment>
<comment type="pathway">
    <text>Amino-acid degradation; L-threonine degradation via propanoate pathway; propanoate from L-threonine: step 1/4.</text>
</comment>
<comment type="subunit">
    <text evidence="1">In the native structure, TdcB is in a dimeric form, whereas in the TdcB-AMP complex, it exists in a tetrameric form (dimer of dimers).</text>
</comment>
<comment type="similarity">
    <text evidence="2">Belongs to the serine/threonine dehydratase family.</text>
</comment>
<organism>
    <name type="scientific">Staphylococcus aureus (strain NCTC 8325 / PS 47)</name>
    <dbReference type="NCBI Taxonomy" id="93061"/>
    <lineage>
        <taxon>Bacteria</taxon>
        <taxon>Bacillati</taxon>
        <taxon>Bacillota</taxon>
        <taxon>Bacilli</taxon>
        <taxon>Bacillales</taxon>
        <taxon>Staphylococcaceae</taxon>
        <taxon>Staphylococcus</taxon>
    </lineage>
</organism>
<accession>Q2FYJ3</accession>